<comment type="function">
    <text evidence="1 2 3 4 5">Plays a key role in regulating innate and adaptive immune responses through human Toll-like receptor 2 (TLR2). Interacts with TLR2, leading to the subsequent activation of the mitogen-activated protein kinase (MAPK) and nuclear factor kappa B (NF-kappa-B) signaling pathways. Induces macrophage activation by augmenting the expression of several cell surface molecules (CD40, CD80, CD86 and MHC class II) and pro-inflammatory cytokines (TNF-alpha, IL-6 and IL-12p40) within macrophages. Also participates in adaptive immunity by directing Th1-polarised immune responses (PubMed:25586105). Stimulates specific humoral and cellular immune responses in tuberculosis (TB) patients (PubMed:17328725, PubMed:19467342, PubMed:23136116). Induces a strong IgG(1) antibody response and an increased Th1/Th2 type immune response in mice (PubMed:18426397).</text>
</comment>
<comment type="subunit">
    <text evidence="5">Interacts with human TLR2.</text>
</comment>
<comment type="subcellular location">
    <subcellularLocation>
        <location evidence="5">Secreted</location>
        <location evidence="5">Cell wall</location>
    </subcellularLocation>
    <subcellularLocation>
        <location evidence="5">Cell surface</location>
    </subcellularLocation>
</comment>
<comment type="induction">
    <text evidence="1">Expressed during infection. Expressed during exponential growth in vitro.</text>
</comment>
<comment type="biotechnology">
    <text evidence="1 2 3 4 5">Immunodominant antigen that could be used for serological diagnosis to distinguish patients with active tuberculosis from M.bovis BCG-vaccinated individuals (PubMed:17328725, PubMed:19467342, PubMed:23136116). Candidate for development of a vaccine for the control of tuberculosis (PubMed:18426397, PubMed:25586105).</text>
</comment>
<comment type="similarity">
    <text evidence="7">Belongs to the mycobacterial PPE family.</text>
</comment>
<dbReference type="EMBL" id="AL123456">
    <property type="protein sequence ID" value="CCP46247.1"/>
    <property type="molecule type" value="Genomic_DNA"/>
</dbReference>
<dbReference type="PIR" id="F70738">
    <property type="entry name" value="F70738"/>
</dbReference>
<dbReference type="RefSeq" id="WP_003916145.1">
    <property type="nucleotide sequence ID" value="NZ_NVQJ01000027.1"/>
</dbReference>
<dbReference type="RefSeq" id="YP_177971.1">
    <property type="nucleotide sequence ID" value="NC_000962.3"/>
</dbReference>
<dbReference type="SMR" id="Q50703"/>
<dbReference type="STRING" id="83332.Rv3425"/>
<dbReference type="PaxDb" id="83332-Rv3425"/>
<dbReference type="DNASU" id="887635"/>
<dbReference type="GeneID" id="887635"/>
<dbReference type="KEGG" id="mtu:Rv3425"/>
<dbReference type="KEGG" id="mtv:RVBD_3425"/>
<dbReference type="TubercuList" id="Rv3425"/>
<dbReference type="eggNOG" id="COG5651">
    <property type="taxonomic scope" value="Bacteria"/>
</dbReference>
<dbReference type="InParanoid" id="Q50703"/>
<dbReference type="PhylomeDB" id="Q50703"/>
<dbReference type="Proteomes" id="UP000001584">
    <property type="component" value="Chromosome"/>
</dbReference>
<dbReference type="GO" id="GO:0009986">
    <property type="term" value="C:cell surface"/>
    <property type="evidence" value="ECO:0007669"/>
    <property type="project" value="UniProtKB-SubCell"/>
</dbReference>
<dbReference type="GO" id="GO:0005576">
    <property type="term" value="C:extracellular region"/>
    <property type="evidence" value="ECO:0007669"/>
    <property type="project" value="UniProtKB-KW"/>
</dbReference>
<dbReference type="Gene3D" id="1.20.1260.20">
    <property type="entry name" value="PPE superfamily"/>
    <property type="match status" value="1"/>
</dbReference>
<dbReference type="InterPro" id="IPR000030">
    <property type="entry name" value="PPE_dom"/>
</dbReference>
<dbReference type="InterPro" id="IPR038332">
    <property type="entry name" value="PPE_sf"/>
</dbReference>
<dbReference type="PANTHER" id="PTHR46766">
    <property type="entry name" value="GLUTAMINE-RICH PROTEIN 2"/>
    <property type="match status" value="1"/>
</dbReference>
<dbReference type="PANTHER" id="PTHR46766:SF1">
    <property type="entry name" value="GLUTAMINE-RICH PROTEIN 2"/>
    <property type="match status" value="1"/>
</dbReference>
<dbReference type="Pfam" id="PF00823">
    <property type="entry name" value="PPE"/>
    <property type="match status" value="1"/>
</dbReference>
<dbReference type="SUPFAM" id="SSF140459">
    <property type="entry name" value="PE/PPE dimer-like"/>
    <property type="match status" value="1"/>
</dbReference>
<gene>
    <name evidence="6 8" type="primary">PPE57</name>
    <name evidence="8" type="ordered locus">Rv3425</name>
    <name type="ORF">MTCY78.04c</name>
</gene>
<name>PPE57_MYCTU</name>
<sequence>MHPMIPAEYISNIIYEGPGADSLFFASGQLRELAYSVETTAESLEDELDELDENWKGSSSDLLADAVERYLQWLSKHSSQLKHAAWVINGLANAYNDTRRKVVPPEEIAANREERRRLIASNVAGVNTPAIADLDAQYDQYRARNVAVMNAYVSWTRSALSDLPRWREPPQIYRGG</sequence>
<protein>
    <recommendedName>
        <fullName evidence="7">PPE family protein PPE57</fullName>
    </recommendedName>
</protein>
<organism>
    <name type="scientific">Mycobacterium tuberculosis (strain ATCC 25618 / H37Rv)</name>
    <dbReference type="NCBI Taxonomy" id="83332"/>
    <lineage>
        <taxon>Bacteria</taxon>
        <taxon>Bacillati</taxon>
        <taxon>Actinomycetota</taxon>
        <taxon>Actinomycetes</taxon>
        <taxon>Mycobacteriales</taxon>
        <taxon>Mycobacteriaceae</taxon>
        <taxon>Mycobacterium</taxon>
        <taxon>Mycobacterium tuberculosis complex</taxon>
    </lineage>
</organism>
<keyword id="KW-0134">Cell wall</keyword>
<keyword id="KW-1185">Reference proteome</keyword>
<keyword id="KW-0964">Secreted</keyword>
<keyword id="KW-0843">Virulence</keyword>
<accession>Q50703</accession>
<accession>L0TE36</accession>
<reference key="1">
    <citation type="journal article" date="1998" name="Nature">
        <title>Deciphering the biology of Mycobacterium tuberculosis from the complete genome sequence.</title>
        <authorList>
            <person name="Cole S.T."/>
            <person name="Brosch R."/>
            <person name="Parkhill J."/>
            <person name="Garnier T."/>
            <person name="Churcher C.M."/>
            <person name="Harris D.E."/>
            <person name="Gordon S.V."/>
            <person name="Eiglmeier K."/>
            <person name="Gas S."/>
            <person name="Barry C.E. III"/>
            <person name="Tekaia F."/>
            <person name="Badcock K."/>
            <person name="Basham D."/>
            <person name="Brown D."/>
            <person name="Chillingworth T."/>
            <person name="Connor R."/>
            <person name="Davies R.M."/>
            <person name="Devlin K."/>
            <person name="Feltwell T."/>
            <person name="Gentles S."/>
            <person name="Hamlin N."/>
            <person name="Holroyd S."/>
            <person name="Hornsby T."/>
            <person name="Jagels K."/>
            <person name="Krogh A."/>
            <person name="McLean J."/>
            <person name="Moule S."/>
            <person name="Murphy L.D."/>
            <person name="Oliver S."/>
            <person name="Osborne J."/>
            <person name="Quail M.A."/>
            <person name="Rajandream M.A."/>
            <person name="Rogers J."/>
            <person name="Rutter S."/>
            <person name="Seeger K."/>
            <person name="Skelton S."/>
            <person name="Squares S."/>
            <person name="Squares R."/>
            <person name="Sulston J.E."/>
            <person name="Taylor K."/>
            <person name="Whitehead S."/>
            <person name="Barrell B.G."/>
        </authorList>
    </citation>
    <scope>NUCLEOTIDE SEQUENCE [LARGE SCALE GENOMIC DNA]</scope>
    <source>
        <strain>ATCC 25618 / H37Rv</strain>
    </source>
</reference>
<reference key="2">
    <citation type="journal article" date="2007" name="Clin. Microbiol. Infect.">
        <title>PPE protein (Rv3425) from DNA segment RD11 of Mycobacterium tuberculosis: a potential B-cell antigen used for serological diagnosis to distinguish vaccinated controls from tuberculosis patients.</title>
        <authorList>
            <person name="Zhang H."/>
            <person name="Wang J."/>
            <person name="Lei J."/>
            <person name="Zhang M."/>
            <person name="Yang Y."/>
            <person name="Chen Y."/>
            <person name="Wang H."/>
        </authorList>
    </citation>
    <scope>FUNCTION</scope>
    <scope>INDUCTION</scope>
    <scope>BIOTECHNOLOGY</scope>
    <source>
        <strain>H37Rv</strain>
    </source>
</reference>
<reference key="3">
    <citation type="journal article" date="2008" name="Microbiol. Immunol.">
        <title>PPE protein (Rv3425) from DNA segment RD11 of Mycobacterium tuberculosis: a novel immunodominant antigen of Mycobacterium tuberculosis induces humoral and cellular immune responses in mice.</title>
        <authorList>
            <person name="Wang J."/>
            <person name="Qie Y."/>
            <person name="Zhang H."/>
            <person name="Zhu B."/>
            <person name="Xu Y."/>
            <person name="Liu W."/>
            <person name="Chen J."/>
            <person name="Wang H."/>
        </authorList>
    </citation>
    <scope>FUNCTION</scope>
    <scope>BIOTECHNOLOGY</scope>
</reference>
<reference key="4">
    <citation type="journal article" date="2009" name="Microbes Infect.">
        <title>Novel recombinant RD2- and RD11-encoded Mycobacterium tuberculosis antigens are potential candidates for diagnosis of tuberculosis infections in BCG-vaccinated individuals.</title>
        <authorList>
            <person name="Chen J."/>
            <person name="Su X."/>
            <person name="Zhang Y."/>
            <person name="Wang S."/>
            <person name="Shao L."/>
            <person name="Wu J."/>
            <person name="Wang F."/>
            <person name="Zhang S."/>
            <person name="Wang J."/>
            <person name="Weng X."/>
            <person name="Wang H."/>
            <person name="Zhang W."/>
        </authorList>
    </citation>
    <scope>FUNCTION</scope>
    <scope>BIOTECHNOLOGY</scope>
</reference>
<reference key="5">
    <citation type="journal article" date="2013" name="Clin. Vaccine Immunol.">
        <title>Mycobacterium tuberculosis region of difference (RD) 2 antigen Rv1985c and RD11 antigen Rv3425 have the promising potential to distinguish patients with active tuberculosis from M. bovis BCG-vaccinated individuals.</title>
        <authorList>
            <person name="Wang S."/>
            <person name="Chen J."/>
            <person name="Zhang Y."/>
            <person name="Diao N."/>
            <person name="Zhang S."/>
            <person name="Wu J."/>
            <person name="Lu C."/>
            <person name="Wang F."/>
            <person name="Gao Y."/>
            <person name="Shao L."/>
            <person name="Jin J."/>
            <person name="Weng X."/>
            <person name="Zhang W."/>
        </authorList>
    </citation>
    <scope>FUNCTION</scope>
    <scope>BIOTECHNOLOGY</scope>
</reference>
<reference key="6">
    <citation type="journal article" date="2015" name="J. Mol. Med.">
        <title>PPE57 induces activation of macrophages and drives Th1-type immune responses through TLR2.</title>
        <authorList>
            <person name="Xu Y."/>
            <person name="Yang E."/>
            <person name="Huang Q."/>
            <person name="Ni W."/>
            <person name="Kong C."/>
            <person name="Liu G."/>
            <person name="Li G."/>
            <person name="Su H."/>
            <person name="Wang H."/>
        </authorList>
    </citation>
    <scope>FUNCTION</scope>
    <scope>INTERACTION WITH TLR2</scope>
    <scope>SUBCELLULAR LOCATION</scope>
    <scope>BIOTECHNOLOGY</scope>
    <source>
        <strain>H37Rv</strain>
    </source>
</reference>
<proteinExistence type="evidence at protein level"/>
<feature type="chain" id="PRO_0000217853" description="PPE family protein PPE57">
    <location>
        <begin position="1"/>
        <end position="176"/>
    </location>
</feature>
<evidence type="ECO:0000269" key="1">
    <source>
    </source>
</evidence>
<evidence type="ECO:0000269" key="2">
    <source>
    </source>
</evidence>
<evidence type="ECO:0000269" key="3">
    <source>
    </source>
</evidence>
<evidence type="ECO:0000269" key="4">
    <source>
    </source>
</evidence>
<evidence type="ECO:0000269" key="5">
    <source>
    </source>
</evidence>
<evidence type="ECO:0000303" key="6">
    <source>
    </source>
</evidence>
<evidence type="ECO:0000305" key="7"/>
<evidence type="ECO:0000312" key="8">
    <source>
        <dbReference type="EMBL" id="CCP46247.1"/>
    </source>
</evidence>